<feature type="chain" id="PRO_0000357321" description="Very-long-chain 3-oxoacyl-CoA reductase">
    <location>
        <begin position="1"/>
        <end position="341"/>
    </location>
</feature>
<feature type="transmembrane region" description="Helical" evidence="4">
    <location>
        <begin position="22"/>
        <end position="42"/>
    </location>
</feature>
<feature type="active site" description="Proton donor" evidence="2">
    <location>
        <position position="217"/>
    </location>
</feature>
<feature type="active site" description="Lowers pKa of active site Tyr" evidence="2">
    <location>
        <position position="221"/>
    </location>
</feature>
<feature type="binding site" evidence="1">
    <location>
        <position position="67"/>
    </location>
    <ligand>
        <name>NADP(+)</name>
        <dbReference type="ChEBI" id="CHEBI:58349"/>
    </ligand>
</feature>
<feature type="binding site" evidence="1">
    <location>
        <position position="123"/>
    </location>
    <ligand>
        <name>NADP(+)</name>
        <dbReference type="ChEBI" id="CHEBI:58349"/>
    </ligand>
</feature>
<feature type="binding site" evidence="1">
    <location>
        <position position="131"/>
    </location>
    <ligand>
        <name>NADP(+)</name>
        <dbReference type="ChEBI" id="CHEBI:58349"/>
    </ligand>
</feature>
<feature type="binding site" evidence="2">
    <location>
        <position position="150"/>
    </location>
    <ligand>
        <name>NADP(+)</name>
        <dbReference type="ChEBI" id="CHEBI:58349"/>
    </ligand>
</feature>
<feature type="binding site" evidence="2">
    <location>
        <position position="217"/>
    </location>
    <ligand>
        <name>NADP(+)</name>
        <dbReference type="ChEBI" id="CHEBI:58349"/>
    </ligand>
</feature>
<feature type="binding site" evidence="2">
    <location>
        <position position="221"/>
    </location>
    <ligand>
        <name>NADP(+)</name>
        <dbReference type="ChEBI" id="CHEBI:58349"/>
    </ligand>
</feature>
<feature type="binding site" evidence="2">
    <location>
        <position position="250"/>
    </location>
    <ligand>
        <name>NADP(+)</name>
        <dbReference type="ChEBI" id="CHEBI:58349"/>
    </ligand>
</feature>
<feature type="binding site" evidence="1">
    <location>
        <position position="252"/>
    </location>
    <ligand>
        <name>NADP(+)</name>
        <dbReference type="ChEBI" id="CHEBI:58349"/>
    </ligand>
</feature>
<evidence type="ECO:0000250" key="1">
    <source>
        <dbReference type="UniProtKB" id="L0E2Z4"/>
    </source>
</evidence>
<evidence type="ECO:0000250" key="2">
    <source>
        <dbReference type="UniProtKB" id="O93868"/>
    </source>
</evidence>
<evidence type="ECO:0000250" key="3">
    <source>
        <dbReference type="UniProtKB" id="P38286"/>
    </source>
</evidence>
<evidence type="ECO:0000255" key="4">
    <source>
        <dbReference type="HAMAP-Rule" id="MF_03107"/>
    </source>
</evidence>
<evidence type="ECO:0000305" key="5"/>
<reference key="1">
    <citation type="journal article" date="2013" name="G3 (Bethesda)">
        <title>Comparative genomics of a plant-pathogenic fungus, Pyrenophora tritici-repentis, reveals transduplication and the impact of repeat elements on pathogenicity and population divergence.</title>
        <authorList>
            <person name="Manning V.A."/>
            <person name="Pandelova I."/>
            <person name="Dhillon B."/>
            <person name="Wilhelm L.J."/>
            <person name="Goodwin S.B."/>
            <person name="Berlin A.M."/>
            <person name="Figueroa M."/>
            <person name="Freitag M."/>
            <person name="Hane J.K."/>
            <person name="Henrissat B."/>
            <person name="Holman W.H."/>
            <person name="Kodira C.D."/>
            <person name="Martin J."/>
            <person name="Oliver R.P."/>
            <person name="Robbertse B."/>
            <person name="Schackwitz W."/>
            <person name="Schwartz D.C."/>
            <person name="Spatafora J.W."/>
            <person name="Turgeon B.G."/>
            <person name="Yandava C."/>
            <person name="Young S."/>
            <person name="Zhou S."/>
            <person name="Zeng Q."/>
            <person name="Grigoriev I.V."/>
            <person name="Ma L.-J."/>
            <person name="Ciuffetti L.M."/>
        </authorList>
    </citation>
    <scope>NUCLEOTIDE SEQUENCE [LARGE SCALE GENOMIC DNA]</scope>
    <source>
        <strain>Pt-1C-BFP</strain>
    </source>
</reference>
<protein>
    <recommendedName>
        <fullName evidence="4">Very-long-chain 3-oxoacyl-CoA reductase</fullName>
        <ecNumber evidence="4">1.1.1.330</ecNumber>
    </recommendedName>
    <alternativeName>
        <fullName evidence="4">3-ketoacyl-CoA reductase</fullName>
        <shortName evidence="4">3-ketoreductase</shortName>
        <shortName evidence="4">KAR</shortName>
    </alternativeName>
    <alternativeName>
        <fullName evidence="4">Microsomal beta-keto-reductase</fullName>
    </alternativeName>
</protein>
<keyword id="KW-0256">Endoplasmic reticulum</keyword>
<keyword id="KW-0275">Fatty acid biosynthesis</keyword>
<keyword id="KW-0276">Fatty acid metabolism</keyword>
<keyword id="KW-0444">Lipid biosynthesis</keyword>
<keyword id="KW-0443">Lipid metabolism</keyword>
<keyword id="KW-0472">Membrane</keyword>
<keyword id="KW-0521">NADP</keyword>
<keyword id="KW-0560">Oxidoreductase</keyword>
<keyword id="KW-1185">Reference proteome</keyword>
<keyword id="KW-0812">Transmembrane</keyword>
<keyword id="KW-1133">Transmembrane helix</keyword>
<gene>
    <name type="ORF">PTRG_11203</name>
</gene>
<organism>
    <name type="scientific">Pyrenophora tritici-repentis (strain Pt-1C-BFP)</name>
    <name type="common">Wheat tan spot fungus</name>
    <name type="synonym">Drechslera tritici-repentis</name>
    <dbReference type="NCBI Taxonomy" id="426418"/>
    <lineage>
        <taxon>Eukaryota</taxon>
        <taxon>Fungi</taxon>
        <taxon>Dikarya</taxon>
        <taxon>Ascomycota</taxon>
        <taxon>Pezizomycotina</taxon>
        <taxon>Dothideomycetes</taxon>
        <taxon>Pleosporomycetidae</taxon>
        <taxon>Pleosporales</taxon>
        <taxon>Pleosporineae</taxon>
        <taxon>Pleosporaceae</taxon>
        <taxon>Pyrenophora</taxon>
    </lineage>
</organism>
<name>MKAR_PYRTR</name>
<sequence length="341" mass="37083">MANILEPFGIRIDADNSFVQAAVTGFLLVGIASFAAPLISTIRVLLSLFVLPGKSLTTFGPRGTWALITGASDGIGKEFALSLAAKGYNLILVSRTQSKLDSLSADITSKYGPKIAVKTLAMDFALNKDADYNNMKKLIEGLDVSILINNVGLSHSIPVPFTETPKQEMTDIIMINCMATLRVTQLVTPGMVSRKRGLVLTMASFGGFFPTPLLATYSGSKAFLQQWSTALASELEPHGVYVQCVQSHLVTTAMSKIRKTSALVPNPKQFVDATLSKIGRSGGAQGVAFTSTPYWSHGLMHWFLSRFLGERSETVVKVNRGMHENIRRRALRKAERDAKKQ</sequence>
<dbReference type="EC" id="1.1.1.330" evidence="4"/>
<dbReference type="EMBL" id="DS231630">
    <property type="protein sequence ID" value="EDU44253.1"/>
    <property type="status" value="ALT_SEQ"/>
    <property type="molecule type" value="Genomic_DNA"/>
</dbReference>
<dbReference type="RefSeq" id="XP_001941534.1">
    <property type="nucleotide sequence ID" value="XM_001941499.1"/>
</dbReference>
<dbReference type="SMR" id="B2WMJ3"/>
<dbReference type="FunCoup" id="B2WMJ3">
    <property type="interactions" value="690"/>
</dbReference>
<dbReference type="STRING" id="426418.B2WMJ3"/>
<dbReference type="eggNOG" id="KOG1014">
    <property type="taxonomic scope" value="Eukaryota"/>
</dbReference>
<dbReference type="InParanoid" id="B2WMJ3"/>
<dbReference type="OrthoDB" id="6370at28556"/>
<dbReference type="UniPathway" id="UPA00094"/>
<dbReference type="Proteomes" id="UP000001471">
    <property type="component" value="Unassembled WGS sequence"/>
</dbReference>
<dbReference type="GO" id="GO:0005789">
    <property type="term" value="C:endoplasmic reticulum membrane"/>
    <property type="evidence" value="ECO:0007669"/>
    <property type="project" value="UniProtKB-SubCell"/>
</dbReference>
<dbReference type="GO" id="GO:0045703">
    <property type="term" value="F:ketoreductase activity"/>
    <property type="evidence" value="ECO:0007669"/>
    <property type="project" value="UniProtKB-UniRule"/>
</dbReference>
<dbReference type="GO" id="GO:0141040">
    <property type="term" value="F:very-long-chain 3-oxoacyl-CoA reductase activity"/>
    <property type="evidence" value="ECO:0007669"/>
    <property type="project" value="UniProtKB-EC"/>
</dbReference>
<dbReference type="GO" id="GO:0030497">
    <property type="term" value="P:fatty acid elongation"/>
    <property type="evidence" value="ECO:0007669"/>
    <property type="project" value="UniProtKB-UniRule"/>
</dbReference>
<dbReference type="CDD" id="cd05356">
    <property type="entry name" value="17beta-HSD1_like_SDR_c"/>
    <property type="match status" value="1"/>
</dbReference>
<dbReference type="FunFam" id="3.40.50.720:FF:000317">
    <property type="entry name" value="Very-long-chain 3-oxoacyl-CoA reductase"/>
    <property type="match status" value="1"/>
</dbReference>
<dbReference type="Gene3D" id="3.40.50.720">
    <property type="entry name" value="NAD(P)-binding Rossmann-like Domain"/>
    <property type="match status" value="1"/>
</dbReference>
<dbReference type="HAMAP" id="MF_03107">
    <property type="entry name" value="3_ketoreductase"/>
    <property type="match status" value="1"/>
</dbReference>
<dbReference type="InterPro" id="IPR027533">
    <property type="entry name" value="3_ketoreductase_fungal"/>
</dbReference>
<dbReference type="InterPro" id="IPR036291">
    <property type="entry name" value="NAD(P)-bd_dom_sf"/>
</dbReference>
<dbReference type="InterPro" id="IPR020904">
    <property type="entry name" value="Sc_DH/Rdtase_CS"/>
</dbReference>
<dbReference type="InterPro" id="IPR002347">
    <property type="entry name" value="SDR_fam"/>
</dbReference>
<dbReference type="PANTHER" id="PTHR43086:SF2">
    <property type="entry name" value="HYDROXYSTEROID DEHYDROGENASE-LIKE PROTEIN 1"/>
    <property type="match status" value="1"/>
</dbReference>
<dbReference type="PANTHER" id="PTHR43086">
    <property type="entry name" value="VERY-LONG-CHAIN 3-OXOOACYL-COA REDUCTASE"/>
    <property type="match status" value="1"/>
</dbReference>
<dbReference type="Pfam" id="PF00106">
    <property type="entry name" value="adh_short"/>
    <property type="match status" value="1"/>
</dbReference>
<dbReference type="PIRSF" id="PIRSF000126">
    <property type="entry name" value="11-beta-HSD1"/>
    <property type="match status" value="1"/>
</dbReference>
<dbReference type="PRINTS" id="PR00081">
    <property type="entry name" value="GDHRDH"/>
</dbReference>
<dbReference type="SUPFAM" id="SSF51735">
    <property type="entry name" value="NAD(P)-binding Rossmann-fold domains"/>
    <property type="match status" value="1"/>
</dbReference>
<dbReference type="PROSITE" id="PS00061">
    <property type="entry name" value="ADH_SHORT"/>
    <property type="match status" value="1"/>
</dbReference>
<comment type="function">
    <text evidence="4">Component of the microsomal membrane bound fatty acid elongation system, which produces the 26-carbon very long-chain fatty acids (VLCFA) from palmitate. Catalyzes the reduction of the 3-ketoacyl-CoA intermediate that is formed in each cycle of fatty acid elongation. VLCFAs serve as precursors for ceramide and sphingolipids.</text>
</comment>
<comment type="catalytic activity">
    <reaction evidence="4">
        <text>a very-long-chain (3R)-3-hydroxyacyl-CoA + NADP(+) = a very-long-chain 3-oxoacyl-CoA + NADPH + H(+)</text>
        <dbReference type="Rhea" id="RHEA:48680"/>
        <dbReference type="ChEBI" id="CHEBI:15378"/>
        <dbReference type="ChEBI" id="CHEBI:57783"/>
        <dbReference type="ChEBI" id="CHEBI:58349"/>
        <dbReference type="ChEBI" id="CHEBI:85440"/>
        <dbReference type="ChEBI" id="CHEBI:90725"/>
        <dbReference type="EC" id="1.1.1.330"/>
    </reaction>
</comment>
<comment type="pathway">
    <text evidence="3">Lipid metabolism; fatty acid biosynthesis.</text>
</comment>
<comment type="subcellular location">
    <subcellularLocation>
        <location evidence="4">Endoplasmic reticulum membrane</location>
        <topology evidence="4">Single-pass membrane protein</topology>
    </subcellularLocation>
</comment>
<comment type="similarity">
    <text evidence="4">Belongs to the short-chain dehydrogenases/reductases (SDR) family.</text>
</comment>
<comment type="sequence caution" evidence="5">
    <conflict type="erroneous gene model prediction">
        <sequence resource="EMBL-CDS" id="EDU44253"/>
    </conflict>
</comment>
<proteinExistence type="inferred from homology"/>
<accession>B2WMJ3</accession>